<accession>Q9ZSB0</accession>
<keyword id="KW-0068">Autocatalytic cleavage</keyword>
<keyword id="KW-0325">Glycoprotein</keyword>
<keyword id="KW-0378">Hydrolase</keyword>
<keyword id="KW-0645">Protease</keyword>
<keyword id="KW-1185">Reference proteome</keyword>
<keyword id="KW-0964">Secreted</keyword>
<keyword id="KW-0720">Serine protease</keyword>
<keyword id="KW-0732">Signal</keyword>
<keyword id="KW-0865">Zymogen</keyword>
<dbReference type="EC" id="3.4.21.-" evidence="6"/>
<dbReference type="EMBL" id="AF118222">
    <property type="protein sequence ID" value="AAD03440.1"/>
    <property type="molecule type" value="Genomic_DNA"/>
</dbReference>
<dbReference type="EMBL" id="AL049524">
    <property type="protein sequence ID" value="CAB40045.1"/>
    <property type="molecule type" value="Genomic_DNA"/>
</dbReference>
<dbReference type="EMBL" id="AL161517">
    <property type="protein sequence ID" value="CAB78175.1"/>
    <property type="molecule type" value="Genomic_DNA"/>
</dbReference>
<dbReference type="EMBL" id="CP002687">
    <property type="protein sequence ID" value="AEE82893.1"/>
    <property type="molecule type" value="Genomic_DNA"/>
</dbReference>
<dbReference type="PIR" id="T04187">
    <property type="entry name" value="T04187"/>
</dbReference>
<dbReference type="RefSeq" id="NP_567359.1">
    <property type="nucleotide sequence ID" value="NM_117120.2"/>
</dbReference>
<dbReference type="SMR" id="Q9ZSB0"/>
<dbReference type="FunCoup" id="Q9ZSB0">
    <property type="interactions" value="12"/>
</dbReference>
<dbReference type="MEROPS" id="S08.A38"/>
<dbReference type="GlyCosmos" id="Q9ZSB0">
    <property type="glycosylation" value="6 sites, No reported glycans"/>
</dbReference>
<dbReference type="GlyGen" id="Q9ZSB0">
    <property type="glycosylation" value="8 sites"/>
</dbReference>
<dbReference type="PaxDb" id="3702-AT4G10520.1"/>
<dbReference type="EnsemblPlants" id="AT4G10520.1">
    <property type="protein sequence ID" value="AT4G10520.1"/>
    <property type="gene ID" value="AT4G10520"/>
</dbReference>
<dbReference type="GeneID" id="826644"/>
<dbReference type="Gramene" id="AT4G10520.1">
    <property type="protein sequence ID" value="AT4G10520.1"/>
    <property type="gene ID" value="AT4G10520"/>
</dbReference>
<dbReference type="KEGG" id="ath:AT4G10520"/>
<dbReference type="Araport" id="AT4G10520"/>
<dbReference type="TAIR" id="AT4G10520"/>
<dbReference type="eggNOG" id="ENOG502QSF0">
    <property type="taxonomic scope" value="Eukaryota"/>
</dbReference>
<dbReference type="HOGENOM" id="CLU_000625_4_3_1"/>
<dbReference type="InParanoid" id="Q9ZSB0"/>
<dbReference type="OMA" id="CFTSIAR"/>
<dbReference type="PhylomeDB" id="Q9ZSB0"/>
<dbReference type="PRO" id="PR:Q9ZSB0"/>
<dbReference type="Proteomes" id="UP000006548">
    <property type="component" value="Chromosome 4"/>
</dbReference>
<dbReference type="ExpressionAtlas" id="Q9ZSB0">
    <property type="expression patterns" value="baseline"/>
</dbReference>
<dbReference type="GO" id="GO:0005576">
    <property type="term" value="C:extracellular region"/>
    <property type="evidence" value="ECO:0007669"/>
    <property type="project" value="UniProtKB-SubCell"/>
</dbReference>
<dbReference type="GO" id="GO:0004252">
    <property type="term" value="F:serine-type endopeptidase activity"/>
    <property type="evidence" value="ECO:0007669"/>
    <property type="project" value="InterPro"/>
</dbReference>
<dbReference type="GO" id="GO:0006508">
    <property type="term" value="P:proteolysis"/>
    <property type="evidence" value="ECO:0007669"/>
    <property type="project" value="UniProtKB-KW"/>
</dbReference>
<dbReference type="CDD" id="cd02120">
    <property type="entry name" value="PA_subtilisin_like"/>
    <property type="match status" value="1"/>
</dbReference>
<dbReference type="CDD" id="cd04852">
    <property type="entry name" value="Peptidases_S8_3"/>
    <property type="match status" value="1"/>
</dbReference>
<dbReference type="FunFam" id="2.60.40.2310:FF:000001">
    <property type="entry name" value="Subtilisin-like protease SBT1.5"/>
    <property type="match status" value="1"/>
</dbReference>
<dbReference type="FunFam" id="3.40.50.200:FF:000006">
    <property type="entry name" value="Subtilisin-like protease SBT1.5"/>
    <property type="match status" value="1"/>
</dbReference>
<dbReference type="FunFam" id="3.50.30.30:FF:000005">
    <property type="entry name" value="subtilisin-like protease SBT1.5"/>
    <property type="match status" value="1"/>
</dbReference>
<dbReference type="FunFam" id="3.30.70.80:FF:000002">
    <property type="entry name" value="Subtilisin-like protease SBT5.3"/>
    <property type="match status" value="1"/>
</dbReference>
<dbReference type="Gene3D" id="2.60.40.2310">
    <property type="match status" value="1"/>
</dbReference>
<dbReference type="Gene3D" id="3.50.30.30">
    <property type="match status" value="1"/>
</dbReference>
<dbReference type="Gene3D" id="3.30.70.80">
    <property type="entry name" value="Peptidase S8 propeptide/proteinase inhibitor I9"/>
    <property type="match status" value="1"/>
</dbReference>
<dbReference type="Gene3D" id="3.40.50.200">
    <property type="entry name" value="Peptidase S8/S53 domain"/>
    <property type="match status" value="1"/>
</dbReference>
<dbReference type="InterPro" id="IPR000209">
    <property type="entry name" value="Peptidase_S8/S53_dom"/>
</dbReference>
<dbReference type="InterPro" id="IPR036852">
    <property type="entry name" value="Peptidase_S8/S53_dom_sf"/>
</dbReference>
<dbReference type="InterPro" id="IPR022398">
    <property type="entry name" value="Peptidase_S8_His-AS"/>
</dbReference>
<dbReference type="InterPro" id="IPR023828">
    <property type="entry name" value="Peptidase_S8_Ser-AS"/>
</dbReference>
<dbReference type="InterPro" id="IPR015500">
    <property type="entry name" value="Peptidase_S8_subtilisin-rel"/>
</dbReference>
<dbReference type="InterPro" id="IPR034197">
    <property type="entry name" value="Peptidases_S8_3"/>
</dbReference>
<dbReference type="InterPro" id="IPR010259">
    <property type="entry name" value="S8pro/Inhibitor_I9"/>
</dbReference>
<dbReference type="InterPro" id="IPR037045">
    <property type="entry name" value="S8pro/Inhibitor_I9_sf"/>
</dbReference>
<dbReference type="InterPro" id="IPR045051">
    <property type="entry name" value="SBT"/>
</dbReference>
<dbReference type="InterPro" id="IPR041469">
    <property type="entry name" value="Subtilisin-like_FN3"/>
</dbReference>
<dbReference type="PANTHER" id="PTHR10795">
    <property type="entry name" value="PROPROTEIN CONVERTASE SUBTILISIN/KEXIN"/>
    <property type="match status" value="1"/>
</dbReference>
<dbReference type="Pfam" id="PF17766">
    <property type="entry name" value="fn3_6"/>
    <property type="match status" value="1"/>
</dbReference>
<dbReference type="Pfam" id="PF05922">
    <property type="entry name" value="Inhibitor_I9"/>
    <property type="match status" value="1"/>
</dbReference>
<dbReference type="Pfam" id="PF00082">
    <property type="entry name" value="Peptidase_S8"/>
    <property type="match status" value="1"/>
</dbReference>
<dbReference type="PRINTS" id="PR00723">
    <property type="entry name" value="SUBTILISIN"/>
</dbReference>
<dbReference type="SUPFAM" id="SSF52743">
    <property type="entry name" value="Subtilisin-like"/>
    <property type="match status" value="1"/>
</dbReference>
<dbReference type="PROSITE" id="PS51892">
    <property type="entry name" value="SUBTILASE"/>
    <property type="match status" value="1"/>
</dbReference>
<dbReference type="PROSITE" id="PS00137">
    <property type="entry name" value="SUBTILASE_HIS"/>
    <property type="match status" value="1"/>
</dbReference>
<dbReference type="PROSITE" id="PS00138">
    <property type="entry name" value="SUBTILASE_SER"/>
    <property type="match status" value="1"/>
</dbReference>
<name>SBT39_ARATH</name>
<organism>
    <name type="scientific">Arabidopsis thaliana</name>
    <name type="common">Mouse-ear cress</name>
    <dbReference type="NCBI Taxonomy" id="3702"/>
    <lineage>
        <taxon>Eukaryota</taxon>
        <taxon>Viridiplantae</taxon>
        <taxon>Streptophyta</taxon>
        <taxon>Embryophyta</taxon>
        <taxon>Tracheophyta</taxon>
        <taxon>Spermatophyta</taxon>
        <taxon>Magnoliopsida</taxon>
        <taxon>eudicotyledons</taxon>
        <taxon>Gunneridae</taxon>
        <taxon>Pentapetalae</taxon>
        <taxon>rosids</taxon>
        <taxon>malvids</taxon>
        <taxon>Brassicales</taxon>
        <taxon>Brassicaceae</taxon>
        <taxon>Camelineae</taxon>
        <taxon>Arabidopsis</taxon>
    </lineage>
</organism>
<reference key="1">
    <citation type="journal article" date="1999" name="Nature">
        <title>Sequence and analysis of chromosome 4 of the plant Arabidopsis thaliana.</title>
        <authorList>
            <person name="Mayer K.F.X."/>
            <person name="Schueller C."/>
            <person name="Wambutt R."/>
            <person name="Murphy G."/>
            <person name="Volckaert G."/>
            <person name="Pohl T."/>
            <person name="Duesterhoeft A."/>
            <person name="Stiekema W."/>
            <person name="Entian K.-D."/>
            <person name="Terryn N."/>
            <person name="Harris B."/>
            <person name="Ansorge W."/>
            <person name="Brandt P."/>
            <person name="Grivell L.A."/>
            <person name="Rieger M."/>
            <person name="Weichselgartner M."/>
            <person name="de Simone V."/>
            <person name="Obermaier B."/>
            <person name="Mache R."/>
            <person name="Mueller M."/>
            <person name="Kreis M."/>
            <person name="Delseny M."/>
            <person name="Puigdomenech P."/>
            <person name="Watson M."/>
            <person name="Schmidtheini T."/>
            <person name="Reichert B."/>
            <person name="Portetelle D."/>
            <person name="Perez-Alonso M."/>
            <person name="Boutry M."/>
            <person name="Bancroft I."/>
            <person name="Vos P."/>
            <person name="Hoheisel J."/>
            <person name="Zimmermann W."/>
            <person name="Wedler H."/>
            <person name="Ridley P."/>
            <person name="Langham S.-A."/>
            <person name="McCullagh B."/>
            <person name="Bilham L."/>
            <person name="Robben J."/>
            <person name="van der Schueren J."/>
            <person name="Grymonprez B."/>
            <person name="Chuang Y.-J."/>
            <person name="Vandenbussche F."/>
            <person name="Braeken M."/>
            <person name="Weltjens I."/>
            <person name="Voet M."/>
            <person name="Bastiaens I."/>
            <person name="Aert R."/>
            <person name="Defoor E."/>
            <person name="Weitzenegger T."/>
            <person name="Bothe G."/>
            <person name="Ramsperger U."/>
            <person name="Hilbert H."/>
            <person name="Braun M."/>
            <person name="Holzer E."/>
            <person name="Brandt A."/>
            <person name="Peters S."/>
            <person name="van Staveren M."/>
            <person name="Dirkse W."/>
            <person name="Mooijman P."/>
            <person name="Klein Lankhorst R."/>
            <person name="Rose M."/>
            <person name="Hauf J."/>
            <person name="Koetter P."/>
            <person name="Berneiser S."/>
            <person name="Hempel S."/>
            <person name="Feldpausch M."/>
            <person name="Lamberth S."/>
            <person name="Van den Daele H."/>
            <person name="De Keyser A."/>
            <person name="Buysshaert C."/>
            <person name="Gielen J."/>
            <person name="Villarroel R."/>
            <person name="De Clercq R."/>
            <person name="van Montagu M."/>
            <person name="Rogers J."/>
            <person name="Cronin A."/>
            <person name="Quail M.A."/>
            <person name="Bray-Allen S."/>
            <person name="Clark L."/>
            <person name="Doggett J."/>
            <person name="Hall S."/>
            <person name="Kay M."/>
            <person name="Lennard N."/>
            <person name="McLay K."/>
            <person name="Mayes R."/>
            <person name="Pettett A."/>
            <person name="Rajandream M.A."/>
            <person name="Lyne M."/>
            <person name="Benes V."/>
            <person name="Rechmann S."/>
            <person name="Borkova D."/>
            <person name="Bloecker H."/>
            <person name="Scharfe M."/>
            <person name="Grimm M."/>
            <person name="Loehnert T.-H."/>
            <person name="Dose S."/>
            <person name="de Haan M."/>
            <person name="Maarse A.C."/>
            <person name="Schaefer M."/>
            <person name="Mueller-Auer S."/>
            <person name="Gabel C."/>
            <person name="Fuchs M."/>
            <person name="Fartmann B."/>
            <person name="Granderath K."/>
            <person name="Dauner D."/>
            <person name="Herzl A."/>
            <person name="Neumann S."/>
            <person name="Argiriou A."/>
            <person name="Vitale D."/>
            <person name="Liguori R."/>
            <person name="Piravandi E."/>
            <person name="Massenet O."/>
            <person name="Quigley F."/>
            <person name="Clabauld G."/>
            <person name="Muendlein A."/>
            <person name="Felber R."/>
            <person name="Schnabl S."/>
            <person name="Hiller R."/>
            <person name="Schmidt W."/>
            <person name="Lecharny A."/>
            <person name="Aubourg S."/>
            <person name="Chefdor F."/>
            <person name="Cooke R."/>
            <person name="Berger C."/>
            <person name="Monfort A."/>
            <person name="Casacuberta E."/>
            <person name="Gibbons T."/>
            <person name="Weber N."/>
            <person name="Vandenbol M."/>
            <person name="Bargues M."/>
            <person name="Terol J."/>
            <person name="Torres A."/>
            <person name="Perez-Perez A."/>
            <person name="Purnelle B."/>
            <person name="Bent E."/>
            <person name="Johnson S."/>
            <person name="Tacon D."/>
            <person name="Jesse T."/>
            <person name="Heijnen L."/>
            <person name="Schwarz S."/>
            <person name="Scholler P."/>
            <person name="Heber S."/>
            <person name="Francs P."/>
            <person name="Bielke C."/>
            <person name="Frishman D."/>
            <person name="Haase D."/>
            <person name="Lemcke K."/>
            <person name="Mewes H.-W."/>
            <person name="Stocker S."/>
            <person name="Zaccaria P."/>
            <person name="Bevan M."/>
            <person name="Wilson R.K."/>
            <person name="de la Bastide M."/>
            <person name="Habermann K."/>
            <person name="Parnell L."/>
            <person name="Dedhia N."/>
            <person name="Gnoj L."/>
            <person name="Schutz K."/>
            <person name="Huang E."/>
            <person name="Spiegel L."/>
            <person name="Sekhon M."/>
            <person name="Murray J."/>
            <person name="Sheet P."/>
            <person name="Cordes M."/>
            <person name="Abu-Threideh J."/>
            <person name="Stoneking T."/>
            <person name="Kalicki J."/>
            <person name="Graves T."/>
            <person name="Harmon G."/>
            <person name="Edwards J."/>
            <person name="Latreille P."/>
            <person name="Courtney L."/>
            <person name="Cloud J."/>
            <person name="Abbott A."/>
            <person name="Scott K."/>
            <person name="Johnson D."/>
            <person name="Minx P."/>
            <person name="Bentley D."/>
            <person name="Fulton B."/>
            <person name="Miller N."/>
            <person name="Greco T."/>
            <person name="Kemp K."/>
            <person name="Kramer J."/>
            <person name="Fulton L."/>
            <person name="Mardis E."/>
            <person name="Dante M."/>
            <person name="Pepin K."/>
            <person name="Hillier L.W."/>
            <person name="Nelson J."/>
            <person name="Spieth J."/>
            <person name="Ryan E."/>
            <person name="Andrews S."/>
            <person name="Geisel C."/>
            <person name="Layman D."/>
            <person name="Du H."/>
            <person name="Ali J."/>
            <person name="Berghoff A."/>
            <person name="Jones K."/>
            <person name="Drone K."/>
            <person name="Cotton M."/>
            <person name="Joshu C."/>
            <person name="Antonoiu B."/>
            <person name="Zidanic M."/>
            <person name="Strong C."/>
            <person name="Sun H."/>
            <person name="Lamar B."/>
            <person name="Yordan C."/>
            <person name="Ma P."/>
            <person name="Zhong J."/>
            <person name="Preston R."/>
            <person name="Vil D."/>
            <person name="Shekher M."/>
            <person name="Matero A."/>
            <person name="Shah R."/>
            <person name="Swaby I.K."/>
            <person name="O'Shaughnessy A."/>
            <person name="Rodriguez M."/>
            <person name="Hoffman J."/>
            <person name="Till S."/>
            <person name="Granat S."/>
            <person name="Shohdy N."/>
            <person name="Hasegawa A."/>
            <person name="Hameed A."/>
            <person name="Lodhi M."/>
            <person name="Johnson A."/>
            <person name="Chen E."/>
            <person name="Marra M.A."/>
            <person name="Martienssen R."/>
            <person name="McCombie W.R."/>
        </authorList>
    </citation>
    <scope>NUCLEOTIDE SEQUENCE [LARGE SCALE GENOMIC DNA]</scope>
    <source>
        <strain>cv. Columbia</strain>
    </source>
</reference>
<reference key="2">
    <citation type="journal article" date="2017" name="Plant J.">
        <title>Araport11: a complete reannotation of the Arabidopsis thaliana reference genome.</title>
        <authorList>
            <person name="Cheng C.Y."/>
            <person name="Krishnakumar V."/>
            <person name="Chan A.P."/>
            <person name="Thibaud-Nissen F."/>
            <person name="Schobel S."/>
            <person name="Town C.D."/>
        </authorList>
    </citation>
    <scope>GENOME REANNOTATION</scope>
    <source>
        <strain>cv. Columbia</strain>
    </source>
</reference>
<reference key="3">
    <citation type="journal article" date="2005" name="PLoS Comput. Biol.">
        <title>Inferring hypotheses on functional relationships of genes: Analysis of the Arabidopsis thaliana subtilase gene family.</title>
        <authorList>
            <person name="Rautengarten C."/>
            <person name="Steinhauser D."/>
            <person name="Bussis D."/>
            <person name="Stintzi A."/>
            <person name="Schaller A."/>
            <person name="Kopka J."/>
            <person name="Altmann T."/>
        </authorList>
    </citation>
    <scope>GENE FAMILY</scope>
    <scope>NOMENCLATURE</scope>
</reference>
<sequence length="756" mass="80670">MSKTILFLALFLSIVLNVQISFVVAESKVYVVYLGEKEHDNPESVTESHHQMLWSLLGSKEAVLDSIVYSYRHGFSGFAAKLTESQAQQISELPEVVQVIPNTLYEMTTTRTWDYLGVSPGNSDSLLQKANMGYNVIVGVIDSGVWPESEMFNDKGFGPIPSRWKGGCESGELFNASIHCNRKLIGAKYFVDGLVAEFGVVNRTQNPEYLSPRDFAGHGTHVASTIGGSFLPNVSYVGLGRGTARGGAPGVHIAVYKACWSGYCSGADVLKAMDEAIHDGVDILSLSLGPSVPLFPETEHTSVGAFHAVAKGIPVVIAAGNAGPTAQTISNVAPWVLTVAATTQDRSFPTAITLGNNITILGQAIYGGPELGFVGLTYPESPLSGDCEKLSANPNSTMEGKVVLCFAASTPSNAAIAAVINAGGLGLIMAKNPTHSLTPTRKFPWVSIDFELGTDILFYIRSTRSPIVKIQASKTLFGQSVSTKVATFSSRGPNSVSPAILKPDIAAPGVNILAAISPNSSINDGGFAMMSGTSMATPVVSGVVVLLKSLHPDWSPSAIKSAIVTTAWRTDPSGEPIFADGSSRKLADPFDYGGGLINPEKAVKPGLIYDMTTDDYVMYMCSVDYSDISISRVLGKITVCPNPKPSVLDLNLPSITIPNLRGEVTLTRTVTNVGPVNSVYKVVIDPPTGINVAVTPAELVFDYTTTKRSFTVRVSTTHKVNTGYYFGSLTWTDNMHNVAIPVSVRTQILQRYYDEN</sequence>
<feature type="signal peptide" evidence="3">
    <location>
        <begin position="1"/>
        <end position="25"/>
    </location>
</feature>
<feature type="propeptide" id="PRO_0000435202" description="Activation peptide" evidence="1">
    <location>
        <begin position="26"/>
        <end position="108"/>
    </location>
</feature>
<feature type="chain" id="PRO_5004338072" description="Subtilisin-like protease SBT3.9">
    <location>
        <begin position="109"/>
        <end status="unknown"/>
    </location>
</feature>
<feature type="propeptide" id="PRO_0000435203" evidence="1">
    <location>
        <begin status="unknown"/>
        <end position="756"/>
    </location>
</feature>
<feature type="domain" description="Inhibitor I9" evidence="3">
    <location>
        <begin position="29"/>
        <end position="106"/>
    </location>
</feature>
<feature type="domain" description="Peptidase S8" evidence="5">
    <location>
        <begin position="112"/>
        <end position="603"/>
    </location>
</feature>
<feature type="domain" description="PA" evidence="3">
    <location>
        <begin position="386"/>
        <end position="460"/>
    </location>
</feature>
<feature type="active site" description="Charge relay system" evidence="5">
    <location>
        <position position="142"/>
    </location>
</feature>
<feature type="active site" description="Charge relay system" evidence="5">
    <location>
        <position position="218"/>
    </location>
</feature>
<feature type="active site" description="Charge relay system" evidence="5">
    <location>
        <position position="534"/>
    </location>
</feature>
<feature type="glycosylation site" description="N-linked (GlcNAc...) asparagine" evidence="4">
    <location>
        <position position="175"/>
    </location>
</feature>
<feature type="glycosylation site" description="N-linked (GlcNAc...) asparagine" evidence="4">
    <location>
        <position position="202"/>
    </location>
</feature>
<feature type="glycosylation site" description="N-linked (GlcNAc...) asparagine" evidence="4">
    <location>
        <position position="233"/>
    </location>
</feature>
<feature type="glycosylation site" description="N-linked (GlcNAc...) asparagine" evidence="4">
    <location>
        <position position="357"/>
    </location>
</feature>
<feature type="glycosylation site" description="N-linked (GlcNAc...) asparagine" evidence="4">
    <location>
        <position position="395"/>
    </location>
</feature>
<feature type="glycosylation site" description="N-linked (GlcNAc...) asparagine" evidence="4">
    <location>
        <position position="519"/>
    </location>
</feature>
<proteinExistence type="inferred from homology"/>
<evidence type="ECO:0000250" key="1">
    <source>
        <dbReference type="UniProtKB" id="Q39547"/>
    </source>
</evidence>
<evidence type="ECO:0000250" key="2">
    <source>
        <dbReference type="UniProtKB" id="Q84WS0"/>
    </source>
</evidence>
<evidence type="ECO:0000255" key="3"/>
<evidence type="ECO:0000255" key="4">
    <source>
        <dbReference type="PROSITE-ProRule" id="PRU00498"/>
    </source>
</evidence>
<evidence type="ECO:0000255" key="5">
    <source>
        <dbReference type="PROSITE-ProRule" id="PRU01240"/>
    </source>
</evidence>
<evidence type="ECO:0000255" key="6">
    <source>
        <dbReference type="PROSITE-ProRule" id="PRU10082"/>
    </source>
</evidence>
<evidence type="ECO:0000303" key="7">
    <source>
    </source>
</evidence>
<evidence type="ECO:0000305" key="8"/>
<evidence type="ECO:0000312" key="9">
    <source>
        <dbReference type="Araport" id="AT4G10520"/>
    </source>
</evidence>
<evidence type="ECO:0000312" key="10">
    <source>
        <dbReference type="EMBL" id="AAD03440.1"/>
    </source>
</evidence>
<evidence type="ECO:0000312" key="11">
    <source>
        <dbReference type="EMBL" id="CAB40045.1"/>
    </source>
</evidence>
<protein>
    <recommendedName>
        <fullName evidence="7">Subtilisin-like protease SBT3.9</fullName>
        <ecNumber evidence="6">3.4.21.-</ecNumber>
    </recommendedName>
    <alternativeName>
        <fullName evidence="7">Subtilase subfamily 3 member 9</fullName>
        <shortName evidence="7">AtSBT3.9</shortName>
    </alternativeName>
</protein>
<gene>
    <name evidence="7" type="primary">SBT3.9</name>
    <name evidence="9" type="ordered locus">At4g10520</name>
    <name evidence="10" type="ORF">F3H7.14</name>
    <name evidence="11" type="ORF">F7L13.100</name>
</gene>
<comment type="subcellular location">
    <subcellularLocation>
        <location evidence="2">Secreted</location>
    </subcellularLocation>
</comment>
<comment type="similarity">
    <text evidence="8">Belongs to the peptidase S8 family.</text>
</comment>